<protein>
    <recommendedName>
        <fullName evidence="1">Protease HtpX</fullName>
        <ecNumber evidence="1">3.4.24.-</ecNumber>
    </recommendedName>
    <alternativeName>
        <fullName evidence="1">Heat shock protein HtpX</fullName>
    </alternativeName>
</protein>
<proteinExistence type="inferred from homology"/>
<name>HTPX_YERPN</name>
<reference key="1">
    <citation type="journal article" date="2006" name="J. Bacteriol.">
        <title>Complete genome sequence of Yersinia pestis strains Antiqua and Nepal516: evidence of gene reduction in an emerging pathogen.</title>
        <authorList>
            <person name="Chain P.S.G."/>
            <person name="Hu P."/>
            <person name="Malfatti S.A."/>
            <person name="Radnedge L."/>
            <person name="Larimer F."/>
            <person name="Vergez L.M."/>
            <person name="Worsham P."/>
            <person name="Chu M.C."/>
            <person name="Andersen G.L."/>
        </authorList>
    </citation>
    <scope>NUCLEOTIDE SEQUENCE [LARGE SCALE GENOMIC DNA]</scope>
    <source>
        <strain>Nepal516</strain>
    </source>
</reference>
<reference key="2">
    <citation type="submission" date="2009-04" db="EMBL/GenBank/DDBJ databases">
        <title>Yersinia pestis Nepal516A whole genome shotgun sequencing project.</title>
        <authorList>
            <person name="Plunkett G. III"/>
            <person name="Anderson B.D."/>
            <person name="Baumler D.J."/>
            <person name="Burland V."/>
            <person name="Cabot E.L."/>
            <person name="Glasner J.D."/>
            <person name="Mau B."/>
            <person name="Neeno-Eckwall E."/>
            <person name="Perna N.T."/>
            <person name="Munk A.C."/>
            <person name="Tapia R."/>
            <person name="Green L.D."/>
            <person name="Rogers Y.C."/>
            <person name="Detter J.C."/>
            <person name="Bruce D.C."/>
            <person name="Brettin T.S."/>
        </authorList>
    </citation>
    <scope>NUCLEOTIDE SEQUENCE [LARGE SCALE GENOMIC DNA]</scope>
    <source>
        <strain>Nepal516</strain>
    </source>
</reference>
<comment type="cofactor">
    <cofactor evidence="1">
        <name>Zn(2+)</name>
        <dbReference type="ChEBI" id="CHEBI:29105"/>
    </cofactor>
    <text evidence="1">Binds 1 zinc ion per subunit.</text>
</comment>
<comment type="subcellular location">
    <subcellularLocation>
        <location evidence="1">Cell inner membrane</location>
        <topology evidence="1">Multi-pass membrane protein</topology>
    </subcellularLocation>
</comment>
<comment type="similarity">
    <text evidence="1">Belongs to the peptidase M48B family.</text>
</comment>
<organism>
    <name type="scientific">Yersinia pestis bv. Antiqua (strain Nepal516)</name>
    <dbReference type="NCBI Taxonomy" id="377628"/>
    <lineage>
        <taxon>Bacteria</taxon>
        <taxon>Pseudomonadati</taxon>
        <taxon>Pseudomonadota</taxon>
        <taxon>Gammaproteobacteria</taxon>
        <taxon>Enterobacterales</taxon>
        <taxon>Yersiniaceae</taxon>
        <taxon>Yersinia</taxon>
    </lineage>
</organism>
<feature type="chain" id="PRO_1000020974" description="Protease HtpX">
    <location>
        <begin position="1"/>
        <end position="293"/>
    </location>
</feature>
<feature type="transmembrane region" description="Helical" evidence="1">
    <location>
        <begin position="4"/>
        <end position="24"/>
    </location>
</feature>
<feature type="transmembrane region" description="Helical" evidence="1">
    <location>
        <begin position="34"/>
        <end position="54"/>
    </location>
</feature>
<feature type="transmembrane region" description="Helical" evidence="1">
    <location>
        <begin position="158"/>
        <end position="178"/>
    </location>
</feature>
<feature type="transmembrane region" description="Helical" evidence="1">
    <location>
        <begin position="193"/>
        <end position="213"/>
    </location>
</feature>
<feature type="active site" evidence="1">
    <location>
        <position position="140"/>
    </location>
</feature>
<feature type="binding site" evidence="1">
    <location>
        <position position="139"/>
    </location>
    <ligand>
        <name>Zn(2+)</name>
        <dbReference type="ChEBI" id="CHEBI:29105"/>
        <note>catalytic</note>
    </ligand>
</feature>
<feature type="binding site" evidence="1">
    <location>
        <position position="143"/>
    </location>
    <ligand>
        <name>Zn(2+)</name>
        <dbReference type="ChEBI" id="CHEBI:29105"/>
        <note>catalytic</note>
    </ligand>
</feature>
<feature type="binding site" evidence="1">
    <location>
        <position position="222"/>
    </location>
    <ligand>
        <name>Zn(2+)</name>
        <dbReference type="ChEBI" id="CHEBI:29105"/>
        <note>catalytic</note>
    </ligand>
</feature>
<gene>
    <name evidence="1" type="primary">htpX</name>
    <name type="ordered locus">YPN_1924</name>
    <name type="ORF">YP516_2141</name>
</gene>
<accession>Q1CIC7</accession>
<accession>C4GTN3</accession>
<evidence type="ECO:0000255" key="1">
    <source>
        <dbReference type="HAMAP-Rule" id="MF_00188"/>
    </source>
</evidence>
<sequence>MMRIALFLLTNLAVMLVFGLVLSLTGIQSSSVQGLMIMAGLFGFGGAFVSLLMSKWMALRSVGGEVIERPRNETEYWLLETVRRQSQQVGIAMPQVAIYQAPDINAFATGARRDASLVAVSTGLLQNMSRDEAEAVIAHEISHVANGDMVTMTLIQGVVNTFVIFISRLIAQIAAGFLSGDRDGESNSPGNPMVYFAVSMVLELVFGILASIITMWFSRHREFHADAGSAKLVGREKMIAALQRLKTSYEPQEAGSMMAFCINGKSKTFSELFMSHPPLDKRIEALRSGQYLK</sequence>
<dbReference type="EC" id="3.4.24.-" evidence="1"/>
<dbReference type="EMBL" id="CP000305">
    <property type="protein sequence ID" value="ABG18253.1"/>
    <property type="molecule type" value="Genomic_DNA"/>
</dbReference>
<dbReference type="EMBL" id="ACNQ01000011">
    <property type="protein sequence ID" value="EEO76547.1"/>
    <property type="molecule type" value="Genomic_DNA"/>
</dbReference>
<dbReference type="RefSeq" id="WP_002210847.1">
    <property type="nucleotide sequence ID" value="NZ_ACNQ01000011.1"/>
</dbReference>
<dbReference type="SMR" id="Q1CIC7"/>
<dbReference type="MEROPS" id="M48.002"/>
<dbReference type="GeneID" id="57976872"/>
<dbReference type="KEGG" id="ypn:YPN_1924"/>
<dbReference type="HOGENOM" id="CLU_042266_1_0_6"/>
<dbReference type="Proteomes" id="UP000008936">
    <property type="component" value="Chromosome"/>
</dbReference>
<dbReference type="GO" id="GO:0005886">
    <property type="term" value="C:plasma membrane"/>
    <property type="evidence" value="ECO:0007669"/>
    <property type="project" value="UniProtKB-SubCell"/>
</dbReference>
<dbReference type="GO" id="GO:0004222">
    <property type="term" value="F:metalloendopeptidase activity"/>
    <property type="evidence" value="ECO:0007669"/>
    <property type="project" value="UniProtKB-UniRule"/>
</dbReference>
<dbReference type="GO" id="GO:0008270">
    <property type="term" value="F:zinc ion binding"/>
    <property type="evidence" value="ECO:0007669"/>
    <property type="project" value="UniProtKB-UniRule"/>
</dbReference>
<dbReference type="GO" id="GO:0006508">
    <property type="term" value="P:proteolysis"/>
    <property type="evidence" value="ECO:0007669"/>
    <property type="project" value="UniProtKB-KW"/>
</dbReference>
<dbReference type="CDD" id="cd07335">
    <property type="entry name" value="M48B_HtpX_like"/>
    <property type="match status" value="1"/>
</dbReference>
<dbReference type="FunFam" id="3.30.2010.10:FF:000001">
    <property type="entry name" value="Protease HtpX"/>
    <property type="match status" value="1"/>
</dbReference>
<dbReference type="Gene3D" id="3.30.2010.10">
    <property type="entry name" value="Metalloproteases ('zincins'), catalytic domain"/>
    <property type="match status" value="1"/>
</dbReference>
<dbReference type="HAMAP" id="MF_00188">
    <property type="entry name" value="Pept_M48_protease_HtpX"/>
    <property type="match status" value="1"/>
</dbReference>
<dbReference type="InterPro" id="IPR050083">
    <property type="entry name" value="HtpX_protease"/>
</dbReference>
<dbReference type="InterPro" id="IPR022919">
    <property type="entry name" value="Pept_M48_protease_HtpX"/>
</dbReference>
<dbReference type="InterPro" id="IPR001915">
    <property type="entry name" value="Peptidase_M48"/>
</dbReference>
<dbReference type="NCBIfam" id="NF003965">
    <property type="entry name" value="PRK05457.1"/>
    <property type="match status" value="1"/>
</dbReference>
<dbReference type="PANTHER" id="PTHR43221">
    <property type="entry name" value="PROTEASE HTPX"/>
    <property type="match status" value="1"/>
</dbReference>
<dbReference type="PANTHER" id="PTHR43221:SF1">
    <property type="entry name" value="PROTEASE HTPX"/>
    <property type="match status" value="1"/>
</dbReference>
<dbReference type="Pfam" id="PF01435">
    <property type="entry name" value="Peptidase_M48"/>
    <property type="match status" value="1"/>
</dbReference>
<keyword id="KW-0997">Cell inner membrane</keyword>
<keyword id="KW-1003">Cell membrane</keyword>
<keyword id="KW-0378">Hydrolase</keyword>
<keyword id="KW-0472">Membrane</keyword>
<keyword id="KW-0479">Metal-binding</keyword>
<keyword id="KW-0482">Metalloprotease</keyword>
<keyword id="KW-0645">Protease</keyword>
<keyword id="KW-0346">Stress response</keyword>
<keyword id="KW-0812">Transmembrane</keyword>
<keyword id="KW-1133">Transmembrane helix</keyword>
<keyword id="KW-0862">Zinc</keyword>